<gene>
    <name evidence="2" type="primary">mutM</name>
    <name evidence="2" type="synonym">fpg</name>
    <name type="ordered locus">Tery_1015</name>
</gene>
<feature type="initiator methionine" description="Removed" evidence="1">
    <location>
        <position position="1"/>
    </location>
</feature>
<feature type="chain" id="PRO_1000008787" description="Formamidopyrimidine-DNA glycosylase">
    <location>
        <begin position="2"/>
        <end position="300"/>
    </location>
</feature>
<feature type="zinc finger region" description="FPG-type" evidence="2">
    <location>
        <begin position="266"/>
        <end position="300"/>
    </location>
</feature>
<feature type="active site" description="Schiff-base intermediate with DNA" evidence="2">
    <location>
        <position position="2"/>
    </location>
</feature>
<feature type="active site" description="Proton donor" evidence="2">
    <location>
        <position position="3"/>
    </location>
</feature>
<feature type="active site" description="Proton donor; for beta-elimination activity" evidence="2">
    <location>
        <position position="60"/>
    </location>
</feature>
<feature type="active site" description="Proton donor; for delta-elimination activity" evidence="2">
    <location>
        <position position="290"/>
    </location>
</feature>
<feature type="binding site" evidence="2">
    <location>
        <position position="108"/>
    </location>
    <ligand>
        <name>DNA</name>
        <dbReference type="ChEBI" id="CHEBI:16991"/>
    </ligand>
</feature>
<feature type="binding site" evidence="2">
    <location>
        <position position="136"/>
    </location>
    <ligand>
        <name>DNA</name>
        <dbReference type="ChEBI" id="CHEBI:16991"/>
    </ligand>
</feature>
<feature type="binding site" evidence="2">
    <location>
        <position position="181"/>
    </location>
    <ligand>
        <name>DNA</name>
        <dbReference type="ChEBI" id="CHEBI:16991"/>
    </ligand>
</feature>
<organism>
    <name type="scientific">Trichodesmium erythraeum (strain IMS101)</name>
    <dbReference type="NCBI Taxonomy" id="203124"/>
    <lineage>
        <taxon>Bacteria</taxon>
        <taxon>Bacillati</taxon>
        <taxon>Cyanobacteriota</taxon>
        <taxon>Cyanophyceae</taxon>
        <taxon>Oscillatoriophycideae</taxon>
        <taxon>Oscillatoriales</taxon>
        <taxon>Microcoleaceae</taxon>
        <taxon>Trichodesmium</taxon>
    </lineage>
</organism>
<sequence>MPELPEVEIVKQGLNQLTLNKRILGGEVLLERTLAYPISVADFLRGLEGKAIAQWHRQGKYLLAQLYKWGKKNSKLQEYENEDGWLGVHLRMTGQLLWVNPEESLHKHTRVRLFFGHNSSGDKDSSNYELRFVDQRTFGKMWGVPPGKEISKVITGLQQLGLEPFSPEFSPKYLNKKLYKRHRPIKTALLDQTTIAGLGNIYADEALFLSGIRPTTICKDLTEKQIEQLHLAILKVLQTAINAGGTTFSNFLNVKGVNGNYGGVAWVYSRAGQPCRICNTPLEKIKLAGRSTHFCPQCQK</sequence>
<keyword id="KW-0227">DNA damage</keyword>
<keyword id="KW-0234">DNA repair</keyword>
<keyword id="KW-0238">DNA-binding</keyword>
<keyword id="KW-0326">Glycosidase</keyword>
<keyword id="KW-0378">Hydrolase</keyword>
<keyword id="KW-0456">Lyase</keyword>
<keyword id="KW-0479">Metal-binding</keyword>
<keyword id="KW-0511">Multifunctional enzyme</keyword>
<keyword id="KW-0862">Zinc</keyword>
<keyword id="KW-0863">Zinc-finger</keyword>
<comment type="function">
    <text evidence="2">Involved in base excision repair of DNA damaged by oxidation or by mutagenic agents. Acts as a DNA glycosylase that recognizes and removes damaged bases. Has a preference for oxidized purines, such as 7,8-dihydro-8-oxoguanine (8-oxoG). Has AP (apurinic/apyrimidinic) lyase activity and introduces nicks in the DNA strand. Cleaves the DNA backbone by beta-delta elimination to generate a single-strand break at the site of the removed base with both 3'- and 5'-phosphates.</text>
</comment>
<comment type="catalytic activity">
    <reaction evidence="2">
        <text>Hydrolysis of DNA containing ring-opened 7-methylguanine residues, releasing 2,6-diamino-4-hydroxy-5-(N-methyl)formamidopyrimidine.</text>
        <dbReference type="EC" id="3.2.2.23"/>
    </reaction>
</comment>
<comment type="catalytic activity">
    <reaction evidence="2">
        <text>2'-deoxyribonucleotide-(2'-deoxyribose 5'-phosphate)-2'-deoxyribonucleotide-DNA = a 3'-end 2'-deoxyribonucleotide-(2,3-dehydro-2,3-deoxyribose 5'-phosphate)-DNA + a 5'-end 5'-phospho-2'-deoxyribonucleoside-DNA + H(+)</text>
        <dbReference type="Rhea" id="RHEA:66592"/>
        <dbReference type="Rhea" id="RHEA-COMP:13180"/>
        <dbReference type="Rhea" id="RHEA-COMP:16897"/>
        <dbReference type="Rhea" id="RHEA-COMP:17067"/>
        <dbReference type="ChEBI" id="CHEBI:15378"/>
        <dbReference type="ChEBI" id="CHEBI:136412"/>
        <dbReference type="ChEBI" id="CHEBI:157695"/>
        <dbReference type="ChEBI" id="CHEBI:167181"/>
        <dbReference type="EC" id="4.2.99.18"/>
    </reaction>
</comment>
<comment type="cofactor">
    <cofactor evidence="2">
        <name>Zn(2+)</name>
        <dbReference type="ChEBI" id="CHEBI:29105"/>
    </cofactor>
    <text evidence="2">Binds 1 zinc ion per subunit.</text>
</comment>
<comment type="subunit">
    <text evidence="2">Monomer.</text>
</comment>
<comment type="similarity">
    <text evidence="2">Belongs to the FPG family.</text>
</comment>
<name>FPG_TRIEI</name>
<protein>
    <recommendedName>
        <fullName evidence="2">Formamidopyrimidine-DNA glycosylase</fullName>
        <shortName evidence="2">Fapy-DNA glycosylase</shortName>
        <ecNumber evidence="2">3.2.2.23</ecNumber>
    </recommendedName>
    <alternativeName>
        <fullName evidence="2">DNA-(apurinic or apyrimidinic site) lyase MutM</fullName>
        <shortName evidence="2">AP lyase MutM</shortName>
        <ecNumber evidence="2">4.2.99.18</ecNumber>
    </alternativeName>
</protein>
<proteinExistence type="inferred from homology"/>
<dbReference type="EC" id="3.2.2.23" evidence="2"/>
<dbReference type="EC" id="4.2.99.18" evidence="2"/>
<dbReference type="EMBL" id="CP000393">
    <property type="protein sequence ID" value="ABG50392.1"/>
    <property type="molecule type" value="Genomic_DNA"/>
</dbReference>
<dbReference type="RefSeq" id="WP_011610779.1">
    <property type="nucleotide sequence ID" value="NC_008312.1"/>
</dbReference>
<dbReference type="SMR" id="Q117D2"/>
<dbReference type="STRING" id="203124.Tery_1015"/>
<dbReference type="KEGG" id="ter:Tery_1015"/>
<dbReference type="eggNOG" id="COG0266">
    <property type="taxonomic scope" value="Bacteria"/>
</dbReference>
<dbReference type="HOGENOM" id="CLU_038423_1_2_3"/>
<dbReference type="OrthoDB" id="9800855at2"/>
<dbReference type="GO" id="GO:0034039">
    <property type="term" value="F:8-oxo-7,8-dihydroguanine DNA N-glycosylase activity"/>
    <property type="evidence" value="ECO:0007669"/>
    <property type="project" value="TreeGrafter"/>
</dbReference>
<dbReference type="GO" id="GO:0140078">
    <property type="term" value="F:class I DNA-(apurinic or apyrimidinic site) endonuclease activity"/>
    <property type="evidence" value="ECO:0007669"/>
    <property type="project" value="UniProtKB-EC"/>
</dbReference>
<dbReference type="GO" id="GO:0003684">
    <property type="term" value="F:damaged DNA binding"/>
    <property type="evidence" value="ECO:0007669"/>
    <property type="project" value="InterPro"/>
</dbReference>
<dbReference type="GO" id="GO:0008270">
    <property type="term" value="F:zinc ion binding"/>
    <property type="evidence" value="ECO:0007669"/>
    <property type="project" value="UniProtKB-UniRule"/>
</dbReference>
<dbReference type="GO" id="GO:0006284">
    <property type="term" value="P:base-excision repair"/>
    <property type="evidence" value="ECO:0007669"/>
    <property type="project" value="InterPro"/>
</dbReference>
<dbReference type="CDD" id="cd08966">
    <property type="entry name" value="EcFpg-like_N"/>
    <property type="match status" value="1"/>
</dbReference>
<dbReference type="FunFam" id="1.10.8.50:FF:000003">
    <property type="entry name" value="Formamidopyrimidine-DNA glycosylase"/>
    <property type="match status" value="1"/>
</dbReference>
<dbReference type="Gene3D" id="1.10.8.50">
    <property type="match status" value="1"/>
</dbReference>
<dbReference type="Gene3D" id="3.20.190.10">
    <property type="entry name" value="MutM-like, N-terminal"/>
    <property type="match status" value="1"/>
</dbReference>
<dbReference type="HAMAP" id="MF_00103">
    <property type="entry name" value="Fapy_DNA_glycosyl"/>
    <property type="match status" value="1"/>
</dbReference>
<dbReference type="InterPro" id="IPR015886">
    <property type="entry name" value="DNA_glyclase/AP_lyase_DNA-bd"/>
</dbReference>
<dbReference type="InterPro" id="IPR015887">
    <property type="entry name" value="DNA_glyclase_Znf_dom_DNA_BS"/>
</dbReference>
<dbReference type="InterPro" id="IPR020629">
    <property type="entry name" value="Formamido-pyr_DNA_Glyclase"/>
</dbReference>
<dbReference type="InterPro" id="IPR012319">
    <property type="entry name" value="FPG_cat"/>
</dbReference>
<dbReference type="InterPro" id="IPR035937">
    <property type="entry name" value="MutM-like_N-ter"/>
</dbReference>
<dbReference type="InterPro" id="IPR010979">
    <property type="entry name" value="Ribosomal_uS13-like_H2TH"/>
</dbReference>
<dbReference type="InterPro" id="IPR000214">
    <property type="entry name" value="Znf_DNA_glyclase/AP_lyase"/>
</dbReference>
<dbReference type="InterPro" id="IPR010663">
    <property type="entry name" value="Znf_FPG/IleRS"/>
</dbReference>
<dbReference type="NCBIfam" id="TIGR00577">
    <property type="entry name" value="fpg"/>
    <property type="match status" value="1"/>
</dbReference>
<dbReference type="NCBIfam" id="NF002211">
    <property type="entry name" value="PRK01103.1"/>
    <property type="match status" value="1"/>
</dbReference>
<dbReference type="NCBIfam" id="NF010551">
    <property type="entry name" value="PRK13945.1"/>
    <property type="match status" value="1"/>
</dbReference>
<dbReference type="PANTHER" id="PTHR22993">
    <property type="entry name" value="FORMAMIDOPYRIMIDINE-DNA GLYCOSYLASE"/>
    <property type="match status" value="1"/>
</dbReference>
<dbReference type="PANTHER" id="PTHR22993:SF9">
    <property type="entry name" value="FORMAMIDOPYRIMIDINE-DNA GLYCOSYLASE"/>
    <property type="match status" value="1"/>
</dbReference>
<dbReference type="Pfam" id="PF01149">
    <property type="entry name" value="Fapy_DNA_glyco"/>
    <property type="match status" value="1"/>
</dbReference>
<dbReference type="Pfam" id="PF06831">
    <property type="entry name" value="H2TH"/>
    <property type="match status" value="1"/>
</dbReference>
<dbReference type="Pfam" id="PF06827">
    <property type="entry name" value="zf-FPG_IleRS"/>
    <property type="match status" value="1"/>
</dbReference>
<dbReference type="SMART" id="SM00898">
    <property type="entry name" value="Fapy_DNA_glyco"/>
    <property type="match status" value="1"/>
</dbReference>
<dbReference type="SMART" id="SM01232">
    <property type="entry name" value="H2TH"/>
    <property type="match status" value="1"/>
</dbReference>
<dbReference type="SUPFAM" id="SSF57716">
    <property type="entry name" value="Glucocorticoid receptor-like (DNA-binding domain)"/>
    <property type="match status" value="1"/>
</dbReference>
<dbReference type="SUPFAM" id="SSF81624">
    <property type="entry name" value="N-terminal domain of MutM-like DNA repair proteins"/>
    <property type="match status" value="1"/>
</dbReference>
<dbReference type="SUPFAM" id="SSF46946">
    <property type="entry name" value="S13-like H2TH domain"/>
    <property type="match status" value="1"/>
</dbReference>
<dbReference type="PROSITE" id="PS51068">
    <property type="entry name" value="FPG_CAT"/>
    <property type="match status" value="1"/>
</dbReference>
<dbReference type="PROSITE" id="PS01242">
    <property type="entry name" value="ZF_FPG_1"/>
    <property type="match status" value="1"/>
</dbReference>
<dbReference type="PROSITE" id="PS51066">
    <property type="entry name" value="ZF_FPG_2"/>
    <property type="match status" value="1"/>
</dbReference>
<evidence type="ECO:0000250" key="1"/>
<evidence type="ECO:0000255" key="2">
    <source>
        <dbReference type="HAMAP-Rule" id="MF_00103"/>
    </source>
</evidence>
<reference key="1">
    <citation type="journal article" date="2015" name="Proc. Natl. Acad. Sci. U.S.A.">
        <title>Trichodesmium genome maintains abundant, widespread noncoding DNA in situ, despite oligotrophic lifestyle.</title>
        <authorList>
            <person name="Walworth N."/>
            <person name="Pfreundt U."/>
            <person name="Nelson W.C."/>
            <person name="Mincer T."/>
            <person name="Heidelberg J.F."/>
            <person name="Fu F."/>
            <person name="Waterbury J.B."/>
            <person name="Glavina del Rio T."/>
            <person name="Goodwin L."/>
            <person name="Kyrpides N.C."/>
            <person name="Land M.L."/>
            <person name="Woyke T."/>
            <person name="Hutchins D.A."/>
            <person name="Hess W.R."/>
            <person name="Webb E.A."/>
        </authorList>
    </citation>
    <scope>NUCLEOTIDE SEQUENCE [LARGE SCALE GENOMIC DNA]</scope>
    <source>
        <strain>IMS101</strain>
    </source>
</reference>
<accession>Q117D2</accession>